<accession>P40269</accession>
<accession>P40271</accession>
<name>H1C6_TRYCR</name>
<keyword id="KW-0158">Chromosome</keyword>
<keyword id="KW-0238">DNA-binding</keyword>
<keyword id="KW-0539">Nucleus</keyword>
<protein>
    <recommendedName>
        <fullName>Histone H1.C6/H1.C9</fullName>
    </recommendedName>
</protein>
<comment type="subcellular location">
    <subcellularLocation>
        <location evidence="1">Nucleus</location>
    </subcellularLocation>
    <subcellularLocation>
        <location evidence="1">Chromosome</location>
    </subcellularLocation>
</comment>
<evidence type="ECO:0000250" key="1"/>
<evidence type="ECO:0000256" key="2">
    <source>
        <dbReference type="SAM" id="MobiDB-lite"/>
    </source>
</evidence>
<feature type="chain" id="PRO_0000195992" description="Histone H1.C6/H1.C9">
    <location>
        <begin position="1"/>
        <end position="87"/>
    </location>
</feature>
<feature type="region of interest" description="Disordered" evidence="2">
    <location>
        <begin position="1"/>
        <end position="87"/>
    </location>
</feature>
<feature type="compositionally biased region" description="Basic residues" evidence="2">
    <location>
        <begin position="11"/>
        <end position="87"/>
    </location>
</feature>
<sequence>MSDAAVPPKKASPKKASPKKAAPKKAVAKKTPAKKTAKKPAVKKPAAKKRAAPKKKPAAAKKAVTKSAKKHAAKKAPKKAVKKAPKK</sequence>
<proteinExistence type="inferred from homology"/>
<reference key="1">
    <citation type="journal article" date="1994" name="Mol. Biochem. Parasitol.">
        <title>A gene family encoding heterogeneous histone H1 proteins in Trypanosoma cruzi.</title>
        <authorList>
            <person name="Aaslund L."/>
            <person name="Carlsson L."/>
            <person name="Henriksson J."/>
            <person name="Rydaaker M."/>
            <person name="Toro G.C."/>
            <person name="Galanti N."/>
            <person name="Pettersson U."/>
        </authorList>
    </citation>
    <scope>NUCLEOTIDE SEQUENCE [MRNA]</scope>
    <source>
        <strain>Tulahuen 2</strain>
    </source>
</reference>
<dbReference type="EMBL" id="L27120">
    <property type="protein sequence ID" value="AAA66479.1"/>
    <property type="molecule type" value="mRNA"/>
</dbReference>
<dbReference type="EMBL" id="L27117">
    <property type="protein sequence ID" value="AAA66481.1"/>
    <property type="molecule type" value="mRNA"/>
</dbReference>
<dbReference type="GO" id="GO:0000786">
    <property type="term" value="C:nucleosome"/>
    <property type="evidence" value="ECO:0007669"/>
    <property type="project" value="InterPro"/>
</dbReference>
<dbReference type="GO" id="GO:0005634">
    <property type="term" value="C:nucleus"/>
    <property type="evidence" value="ECO:0007669"/>
    <property type="project" value="UniProtKB-SubCell"/>
</dbReference>
<dbReference type="GO" id="GO:0003677">
    <property type="term" value="F:DNA binding"/>
    <property type="evidence" value="ECO:0007669"/>
    <property type="project" value="UniProtKB-KW"/>
</dbReference>
<dbReference type="GO" id="GO:0030527">
    <property type="term" value="F:structural constituent of chromatin"/>
    <property type="evidence" value="ECO:0007669"/>
    <property type="project" value="InterPro"/>
</dbReference>
<dbReference type="GO" id="GO:0006334">
    <property type="term" value="P:nucleosome assembly"/>
    <property type="evidence" value="ECO:0007669"/>
    <property type="project" value="InterPro"/>
</dbReference>
<dbReference type="InterPro" id="IPR005819">
    <property type="entry name" value="H1/H5"/>
</dbReference>
<dbReference type="PRINTS" id="PR00624">
    <property type="entry name" value="HISTONEH5"/>
</dbReference>
<organism>
    <name type="scientific">Trypanosoma cruzi</name>
    <dbReference type="NCBI Taxonomy" id="5693"/>
    <lineage>
        <taxon>Eukaryota</taxon>
        <taxon>Discoba</taxon>
        <taxon>Euglenozoa</taxon>
        <taxon>Kinetoplastea</taxon>
        <taxon>Metakinetoplastina</taxon>
        <taxon>Trypanosomatida</taxon>
        <taxon>Trypanosomatidae</taxon>
        <taxon>Trypanosoma</taxon>
        <taxon>Schizotrypanum</taxon>
    </lineage>
</organism>